<gene>
    <name evidence="1" type="primary">ihfB</name>
    <name evidence="1" type="synonym">himD</name>
    <name type="ordered locus">VS_2056</name>
</gene>
<evidence type="ECO:0000255" key="1">
    <source>
        <dbReference type="HAMAP-Rule" id="MF_00381"/>
    </source>
</evidence>
<organism>
    <name type="scientific">Vibrio atlanticus (strain LGP32)</name>
    <name type="common">Vibrio splendidus (strain Mel32)</name>
    <dbReference type="NCBI Taxonomy" id="575788"/>
    <lineage>
        <taxon>Bacteria</taxon>
        <taxon>Pseudomonadati</taxon>
        <taxon>Pseudomonadota</taxon>
        <taxon>Gammaproteobacteria</taxon>
        <taxon>Vibrionales</taxon>
        <taxon>Vibrionaceae</taxon>
        <taxon>Vibrio</taxon>
    </lineage>
</organism>
<sequence>MTKSELIERLCAEQTHLSAKEIEDAVKDILEHMASTLESGDRIEIRGFGSFSLHYREPRVGRNPKTGDKVELEGKYVPHFKPGKELRERVNSGL</sequence>
<proteinExistence type="inferred from homology"/>
<name>IHFB_VIBA3</name>
<reference key="1">
    <citation type="submission" date="2009-02" db="EMBL/GenBank/DDBJ databases">
        <title>Vibrio splendidus str. LGP32 complete genome.</title>
        <authorList>
            <person name="Mazel D."/>
            <person name="Le Roux F."/>
        </authorList>
    </citation>
    <scope>NUCLEOTIDE SEQUENCE [LARGE SCALE GENOMIC DNA]</scope>
    <source>
        <strain>LGP32</strain>
    </source>
</reference>
<accession>B7VH32</accession>
<dbReference type="EMBL" id="FM954972">
    <property type="protein sequence ID" value="CAV19232.1"/>
    <property type="molecule type" value="Genomic_DNA"/>
</dbReference>
<dbReference type="SMR" id="B7VH32"/>
<dbReference type="STRING" id="575788.VS_2056"/>
<dbReference type="KEGG" id="vsp:VS_2056"/>
<dbReference type="eggNOG" id="COG0776">
    <property type="taxonomic scope" value="Bacteria"/>
</dbReference>
<dbReference type="HOGENOM" id="CLU_105066_2_0_6"/>
<dbReference type="Proteomes" id="UP000009100">
    <property type="component" value="Chromosome 1"/>
</dbReference>
<dbReference type="GO" id="GO:0005694">
    <property type="term" value="C:chromosome"/>
    <property type="evidence" value="ECO:0007669"/>
    <property type="project" value="InterPro"/>
</dbReference>
<dbReference type="GO" id="GO:0005829">
    <property type="term" value="C:cytosol"/>
    <property type="evidence" value="ECO:0007669"/>
    <property type="project" value="TreeGrafter"/>
</dbReference>
<dbReference type="GO" id="GO:0003677">
    <property type="term" value="F:DNA binding"/>
    <property type="evidence" value="ECO:0007669"/>
    <property type="project" value="UniProtKB-UniRule"/>
</dbReference>
<dbReference type="GO" id="GO:0030527">
    <property type="term" value="F:structural constituent of chromatin"/>
    <property type="evidence" value="ECO:0007669"/>
    <property type="project" value="InterPro"/>
</dbReference>
<dbReference type="GO" id="GO:0006310">
    <property type="term" value="P:DNA recombination"/>
    <property type="evidence" value="ECO:0007669"/>
    <property type="project" value="UniProtKB-UniRule"/>
</dbReference>
<dbReference type="GO" id="GO:0006355">
    <property type="term" value="P:regulation of DNA-templated transcription"/>
    <property type="evidence" value="ECO:0007669"/>
    <property type="project" value="UniProtKB-UniRule"/>
</dbReference>
<dbReference type="GO" id="GO:0006417">
    <property type="term" value="P:regulation of translation"/>
    <property type="evidence" value="ECO:0007669"/>
    <property type="project" value="UniProtKB-UniRule"/>
</dbReference>
<dbReference type="CDD" id="cd13836">
    <property type="entry name" value="IHF_B"/>
    <property type="match status" value="1"/>
</dbReference>
<dbReference type="FunFam" id="4.10.520.10:FF:000003">
    <property type="entry name" value="Integration host factor subunit beta"/>
    <property type="match status" value="1"/>
</dbReference>
<dbReference type="Gene3D" id="4.10.520.10">
    <property type="entry name" value="IHF-like DNA-binding proteins"/>
    <property type="match status" value="1"/>
</dbReference>
<dbReference type="HAMAP" id="MF_00381">
    <property type="entry name" value="IHF_beta"/>
    <property type="match status" value="1"/>
</dbReference>
<dbReference type="InterPro" id="IPR000119">
    <property type="entry name" value="Hist_DNA-bd"/>
</dbReference>
<dbReference type="InterPro" id="IPR020816">
    <property type="entry name" value="Histone-like_DNA-bd_CS"/>
</dbReference>
<dbReference type="InterPro" id="IPR010992">
    <property type="entry name" value="IHF-like_DNA-bd_dom_sf"/>
</dbReference>
<dbReference type="InterPro" id="IPR005685">
    <property type="entry name" value="IHF_beta"/>
</dbReference>
<dbReference type="NCBIfam" id="TIGR00988">
    <property type="entry name" value="hip"/>
    <property type="match status" value="1"/>
</dbReference>
<dbReference type="NCBIfam" id="NF001222">
    <property type="entry name" value="PRK00199.1"/>
    <property type="match status" value="1"/>
</dbReference>
<dbReference type="PANTHER" id="PTHR33175">
    <property type="entry name" value="DNA-BINDING PROTEIN HU"/>
    <property type="match status" value="1"/>
</dbReference>
<dbReference type="PANTHER" id="PTHR33175:SF5">
    <property type="entry name" value="INTEGRATION HOST FACTOR SUBUNIT BETA"/>
    <property type="match status" value="1"/>
</dbReference>
<dbReference type="Pfam" id="PF00216">
    <property type="entry name" value="Bac_DNA_binding"/>
    <property type="match status" value="1"/>
</dbReference>
<dbReference type="PRINTS" id="PR01727">
    <property type="entry name" value="DNABINDINGHU"/>
</dbReference>
<dbReference type="SMART" id="SM00411">
    <property type="entry name" value="BHL"/>
    <property type="match status" value="1"/>
</dbReference>
<dbReference type="SUPFAM" id="SSF47729">
    <property type="entry name" value="IHF-like DNA-binding proteins"/>
    <property type="match status" value="1"/>
</dbReference>
<dbReference type="PROSITE" id="PS00045">
    <property type="entry name" value="HISTONE_LIKE"/>
    <property type="match status" value="1"/>
</dbReference>
<protein>
    <recommendedName>
        <fullName evidence="1">Integration host factor subunit beta</fullName>
        <shortName evidence="1">IHF-beta</shortName>
    </recommendedName>
</protein>
<feature type="chain" id="PRO_1000190451" description="Integration host factor subunit beta">
    <location>
        <begin position="1"/>
        <end position="94"/>
    </location>
</feature>
<comment type="function">
    <text evidence="1">This protein is one of the two subunits of integration host factor, a specific DNA-binding protein that functions in genetic recombination as well as in transcriptional and translational control.</text>
</comment>
<comment type="subunit">
    <text evidence="1">Heterodimer of an alpha and a beta chain.</text>
</comment>
<comment type="similarity">
    <text evidence="1">Belongs to the bacterial histone-like protein family.</text>
</comment>
<keyword id="KW-0233">DNA recombination</keyword>
<keyword id="KW-0238">DNA-binding</keyword>
<keyword id="KW-0804">Transcription</keyword>
<keyword id="KW-0805">Transcription regulation</keyword>
<keyword id="KW-0810">Translation regulation</keyword>